<organism>
    <name type="scientific">Escherichia coli (strain K12)</name>
    <dbReference type="NCBI Taxonomy" id="83333"/>
    <lineage>
        <taxon>Bacteria</taxon>
        <taxon>Pseudomonadati</taxon>
        <taxon>Pseudomonadota</taxon>
        <taxon>Gammaproteobacteria</taxon>
        <taxon>Enterobacterales</taxon>
        <taxon>Enterobacteriaceae</taxon>
        <taxon>Escherichia</taxon>
    </lineage>
</organism>
<name>YGEI_ECOLI</name>
<feature type="chain" id="PRO_0000169341" description="Uncharacterized protein YgeI">
    <location>
        <begin position="1"/>
        <end position="72"/>
    </location>
</feature>
<proteinExistence type="predicted"/>
<accession>Q46789</accession>
<accession>Q2M9Y4</accession>
<keyword id="KW-1185">Reference proteome</keyword>
<dbReference type="EMBL" id="U28375">
    <property type="protein sequence ID" value="AAA83035.1"/>
    <property type="molecule type" value="Genomic_DNA"/>
</dbReference>
<dbReference type="EMBL" id="U00096">
    <property type="protein sequence ID" value="AAC75892.1"/>
    <property type="molecule type" value="Genomic_DNA"/>
</dbReference>
<dbReference type="EMBL" id="AP009048">
    <property type="protein sequence ID" value="BAE76922.1"/>
    <property type="molecule type" value="Genomic_DNA"/>
</dbReference>
<dbReference type="PIR" id="F65068">
    <property type="entry name" value="F65068"/>
</dbReference>
<dbReference type="RefSeq" id="NP_417330.1">
    <property type="nucleotide sequence ID" value="NC_000913.3"/>
</dbReference>
<dbReference type="RefSeq" id="WP_000184091.1">
    <property type="nucleotide sequence ID" value="NZ_STEB01000001.1"/>
</dbReference>
<dbReference type="BioGRID" id="4259230">
    <property type="interactions" value="2"/>
</dbReference>
<dbReference type="FunCoup" id="Q46789">
    <property type="interactions" value="21"/>
</dbReference>
<dbReference type="STRING" id="511145.b2853"/>
<dbReference type="PaxDb" id="511145-b2853"/>
<dbReference type="EnsemblBacteria" id="AAC75892">
    <property type="protein sequence ID" value="AAC75892"/>
    <property type="gene ID" value="b2853"/>
</dbReference>
<dbReference type="GeneID" id="947336"/>
<dbReference type="KEGG" id="ecj:JW5456"/>
<dbReference type="KEGG" id="eco:b2853"/>
<dbReference type="KEGG" id="ecoc:C3026_15660"/>
<dbReference type="PATRIC" id="fig|83333.103.peg.3748"/>
<dbReference type="EchoBASE" id="EB2854"/>
<dbReference type="HOGENOM" id="CLU_2716265_0_0_6"/>
<dbReference type="InParanoid" id="Q46789"/>
<dbReference type="OMA" id="QNDMYSK"/>
<dbReference type="OrthoDB" id="9958690at2"/>
<dbReference type="BioCyc" id="EcoCyc:G7473-MONOMER"/>
<dbReference type="PRO" id="PR:Q46789"/>
<dbReference type="Proteomes" id="UP000000625">
    <property type="component" value="Chromosome"/>
</dbReference>
<protein>
    <recommendedName>
        <fullName>Uncharacterized protein YgeI</fullName>
    </recommendedName>
</protein>
<sequence length="72" mass="8055">MTNPIGINNLSQSSNIANATGDEVVSLDKHINTSATDTDQIQAFIVSTWMAPFQNDMYSEDNPISPYYKIEW</sequence>
<reference key="1">
    <citation type="journal article" date="1997" name="Science">
        <title>The complete genome sequence of Escherichia coli K-12.</title>
        <authorList>
            <person name="Blattner F.R."/>
            <person name="Plunkett G. III"/>
            <person name="Bloch C.A."/>
            <person name="Perna N.T."/>
            <person name="Burland V."/>
            <person name="Riley M."/>
            <person name="Collado-Vides J."/>
            <person name="Glasner J.D."/>
            <person name="Rode C.K."/>
            <person name="Mayhew G.F."/>
            <person name="Gregor J."/>
            <person name="Davis N.W."/>
            <person name="Kirkpatrick H.A."/>
            <person name="Goeden M.A."/>
            <person name="Rose D.J."/>
            <person name="Mau B."/>
            <person name="Shao Y."/>
        </authorList>
    </citation>
    <scope>NUCLEOTIDE SEQUENCE [LARGE SCALE GENOMIC DNA]</scope>
    <source>
        <strain>K12 / MG1655 / ATCC 47076</strain>
    </source>
</reference>
<reference key="2">
    <citation type="journal article" date="2006" name="Mol. Syst. Biol.">
        <title>Highly accurate genome sequences of Escherichia coli K-12 strains MG1655 and W3110.</title>
        <authorList>
            <person name="Hayashi K."/>
            <person name="Morooka N."/>
            <person name="Yamamoto Y."/>
            <person name="Fujita K."/>
            <person name="Isono K."/>
            <person name="Choi S."/>
            <person name="Ohtsubo E."/>
            <person name="Baba T."/>
            <person name="Wanner B.L."/>
            <person name="Mori H."/>
            <person name="Horiuchi T."/>
        </authorList>
    </citation>
    <scope>NUCLEOTIDE SEQUENCE [LARGE SCALE GENOMIC DNA]</scope>
    <source>
        <strain>K12 / W3110 / ATCC 27325 / DSM 5911</strain>
    </source>
</reference>
<gene>
    <name type="primary">ygeI</name>
    <name type="ordered locus">b2853</name>
    <name type="ordered locus">JW5456</name>
</gene>